<feature type="chain" id="PRO_0000140127" description="GMP synthase [glutamine-hydrolyzing]">
    <location>
        <begin position="1"/>
        <end position="512"/>
    </location>
</feature>
<feature type="domain" description="Glutamine amidotransferase type-1" evidence="1">
    <location>
        <begin position="5"/>
        <end position="195"/>
    </location>
</feature>
<feature type="domain" description="GMPS ATP-PPase" evidence="1">
    <location>
        <begin position="196"/>
        <end position="387"/>
    </location>
</feature>
<feature type="active site" description="Nucleophile" evidence="1">
    <location>
        <position position="82"/>
    </location>
</feature>
<feature type="active site" evidence="1">
    <location>
        <position position="169"/>
    </location>
</feature>
<feature type="active site" evidence="1">
    <location>
        <position position="171"/>
    </location>
</feature>
<feature type="binding site" evidence="1">
    <location>
        <begin position="223"/>
        <end position="229"/>
    </location>
    <ligand>
        <name>ATP</name>
        <dbReference type="ChEBI" id="CHEBI:30616"/>
    </ligand>
</feature>
<protein>
    <recommendedName>
        <fullName evidence="1">GMP synthase [glutamine-hydrolyzing]</fullName>
        <ecNumber evidence="1">6.3.5.2</ecNumber>
    </recommendedName>
    <alternativeName>
        <fullName evidence="1">GMP synthetase</fullName>
    </alternativeName>
    <alternativeName>
        <fullName evidence="1">Glutamine amidotransferase</fullName>
    </alternativeName>
</protein>
<reference key="1">
    <citation type="journal article" date="2002" name="J. Bacteriol.">
        <title>Genome sequence and analysis of the oral bacterium Fusobacterium nucleatum strain ATCC 25586.</title>
        <authorList>
            <person name="Kapatral V."/>
            <person name="Anderson I."/>
            <person name="Ivanova N."/>
            <person name="Reznik G."/>
            <person name="Los T."/>
            <person name="Lykidis A."/>
            <person name="Bhattacharyya A."/>
            <person name="Bartman A."/>
            <person name="Gardner W."/>
            <person name="Grechkin G."/>
            <person name="Zhu L."/>
            <person name="Vasieva O."/>
            <person name="Chu L."/>
            <person name="Kogan Y."/>
            <person name="Chaga O."/>
            <person name="Goltsman E."/>
            <person name="Bernal A."/>
            <person name="Larsen N."/>
            <person name="D'Souza M."/>
            <person name="Walunas T."/>
            <person name="Pusch G."/>
            <person name="Haselkorn R."/>
            <person name="Fonstein M."/>
            <person name="Kyrpides N.C."/>
            <person name="Overbeek R."/>
        </authorList>
    </citation>
    <scope>NUCLEOTIDE SEQUENCE [LARGE SCALE GENOMIC DNA]</scope>
    <source>
        <strain>ATCC 25586 / DSM 15643 / BCRC 10681 / CIP 101130 / JCM 8532 / KCTC 2640 / LMG 13131 / VPI 4355</strain>
    </source>
</reference>
<accession>Q8RDR4</accession>
<gene>
    <name evidence="1" type="primary">guaA</name>
    <name type="ordered locus">FN1444</name>
</gene>
<name>GUAA_FUSNN</name>
<dbReference type="EC" id="6.3.5.2" evidence="1"/>
<dbReference type="EMBL" id="AE009951">
    <property type="protein sequence ID" value="AAL95637.1"/>
    <property type="molecule type" value="Genomic_DNA"/>
</dbReference>
<dbReference type="RefSeq" id="NP_604338.1">
    <property type="nucleotide sequence ID" value="NC_003454.1"/>
</dbReference>
<dbReference type="RefSeq" id="WP_011017155.1">
    <property type="nucleotide sequence ID" value="NZ_CP028101.1"/>
</dbReference>
<dbReference type="SMR" id="Q8RDR4"/>
<dbReference type="FunCoup" id="Q8RDR4">
    <property type="interactions" value="406"/>
</dbReference>
<dbReference type="STRING" id="190304.FN1444"/>
<dbReference type="MEROPS" id="C26.957"/>
<dbReference type="PaxDb" id="190304-FN1444"/>
<dbReference type="EnsemblBacteria" id="AAL95637">
    <property type="protein sequence ID" value="AAL95637"/>
    <property type="gene ID" value="FN1444"/>
</dbReference>
<dbReference type="GeneID" id="79784408"/>
<dbReference type="KEGG" id="fnu:FN1444"/>
<dbReference type="PATRIC" id="fig|190304.8.peg.2003"/>
<dbReference type="eggNOG" id="COG0518">
    <property type="taxonomic scope" value="Bacteria"/>
</dbReference>
<dbReference type="eggNOG" id="COG0519">
    <property type="taxonomic scope" value="Bacteria"/>
</dbReference>
<dbReference type="HOGENOM" id="CLU_014340_0_5_0"/>
<dbReference type="InParanoid" id="Q8RDR4"/>
<dbReference type="BioCyc" id="FNUC190304:G1FZS-2013-MONOMER"/>
<dbReference type="UniPathway" id="UPA00189">
    <property type="reaction ID" value="UER00296"/>
</dbReference>
<dbReference type="Proteomes" id="UP000002521">
    <property type="component" value="Chromosome"/>
</dbReference>
<dbReference type="GO" id="GO:0005829">
    <property type="term" value="C:cytosol"/>
    <property type="evidence" value="ECO:0000318"/>
    <property type="project" value="GO_Central"/>
</dbReference>
<dbReference type="GO" id="GO:0005524">
    <property type="term" value="F:ATP binding"/>
    <property type="evidence" value="ECO:0007669"/>
    <property type="project" value="UniProtKB-UniRule"/>
</dbReference>
<dbReference type="GO" id="GO:0003921">
    <property type="term" value="F:GMP synthase activity"/>
    <property type="evidence" value="ECO:0000318"/>
    <property type="project" value="GO_Central"/>
</dbReference>
<dbReference type="GO" id="GO:0006177">
    <property type="term" value="P:GMP biosynthetic process"/>
    <property type="evidence" value="ECO:0000318"/>
    <property type="project" value="GO_Central"/>
</dbReference>
<dbReference type="CDD" id="cd01742">
    <property type="entry name" value="GATase1_GMP_Synthase"/>
    <property type="match status" value="1"/>
</dbReference>
<dbReference type="CDD" id="cd01997">
    <property type="entry name" value="GMP_synthase_C"/>
    <property type="match status" value="1"/>
</dbReference>
<dbReference type="FunFam" id="3.30.300.10:FF:000002">
    <property type="entry name" value="GMP synthase [glutamine-hydrolyzing]"/>
    <property type="match status" value="1"/>
</dbReference>
<dbReference type="FunFam" id="3.40.50.620:FF:000001">
    <property type="entry name" value="GMP synthase [glutamine-hydrolyzing]"/>
    <property type="match status" value="1"/>
</dbReference>
<dbReference type="FunFam" id="3.40.50.880:FF:000001">
    <property type="entry name" value="GMP synthase [glutamine-hydrolyzing]"/>
    <property type="match status" value="1"/>
</dbReference>
<dbReference type="Gene3D" id="3.30.300.10">
    <property type="match status" value="1"/>
</dbReference>
<dbReference type="Gene3D" id="3.40.50.880">
    <property type="match status" value="1"/>
</dbReference>
<dbReference type="Gene3D" id="3.40.50.620">
    <property type="entry name" value="HUPs"/>
    <property type="match status" value="1"/>
</dbReference>
<dbReference type="HAMAP" id="MF_00344">
    <property type="entry name" value="GMP_synthase"/>
    <property type="match status" value="1"/>
</dbReference>
<dbReference type="InterPro" id="IPR029062">
    <property type="entry name" value="Class_I_gatase-like"/>
</dbReference>
<dbReference type="InterPro" id="IPR017926">
    <property type="entry name" value="GATASE"/>
</dbReference>
<dbReference type="InterPro" id="IPR001674">
    <property type="entry name" value="GMP_synth_C"/>
</dbReference>
<dbReference type="InterPro" id="IPR004739">
    <property type="entry name" value="GMP_synth_GATase"/>
</dbReference>
<dbReference type="InterPro" id="IPR022955">
    <property type="entry name" value="GMP_synthase"/>
</dbReference>
<dbReference type="InterPro" id="IPR025777">
    <property type="entry name" value="GMPS_ATP_PPase_dom"/>
</dbReference>
<dbReference type="InterPro" id="IPR022310">
    <property type="entry name" value="NAD/GMP_synthase"/>
</dbReference>
<dbReference type="InterPro" id="IPR014729">
    <property type="entry name" value="Rossmann-like_a/b/a_fold"/>
</dbReference>
<dbReference type="NCBIfam" id="TIGR00884">
    <property type="entry name" value="guaA_Cterm"/>
    <property type="match status" value="1"/>
</dbReference>
<dbReference type="NCBIfam" id="TIGR00888">
    <property type="entry name" value="guaA_Nterm"/>
    <property type="match status" value="1"/>
</dbReference>
<dbReference type="NCBIfam" id="NF000848">
    <property type="entry name" value="PRK00074.1"/>
    <property type="match status" value="1"/>
</dbReference>
<dbReference type="PANTHER" id="PTHR11922:SF2">
    <property type="entry name" value="GMP SYNTHASE [GLUTAMINE-HYDROLYZING]"/>
    <property type="match status" value="1"/>
</dbReference>
<dbReference type="PANTHER" id="PTHR11922">
    <property type="entry name" value="GMP SYNTHASE-RELATED"/>
    <property type="match status" value="1"/>
</dbReference>
<dbReference type="Pfam" id="PF00117">
    <property type="entry name" value="GATase"/>
    <property type="match status" value="1"/>
</dbReference>
<dbReference type="Pfam" id="PF00958">
    <property type="entry name" value="GMP_synt_C"/>
    <property type="match status" value="1"/>
</dbReference>
<dbReference type="Pfam" id="PF02540">
    <property type="entry name" value="NAD_synthase"/>
    <property type="match status" value="1"/>
</dbReference>
<dbReference type="PRINTS" id="PR00097">
    <property type="entry name" value="ANTSNTHASEII"/>
</dbReference>
<dbReference type="PRINTS" id="PR00099">
    <property type="entry name" value="CPSGATASE"/>
</dbReference>
<dbReference type="PRINTS" id="PR00096">
    <property type="entry name" value="GATASE"/>
</dbReference>
<dbReference type="SUPFAM" id="SSF52402">
    <property type="entry name" value="Adenine nucleotide alpha hydrolases-like"/>
    <property type="match status" value="1"/>
</dbReference>
<dbReference type="SUPFAM" id="SSF52317">
    <property type="entry name" value="Class I glutamine amidotransferase-like"/>
    <property type="match status" value="1"/>
</dbReference>
<dbReference type="SUPFAM" id="SSF54810">
    <property type="entry name" value="GMP synthetase C-terminal dimerisation domain"/>
    <property type="match status" value="1"/>
</dbReference>
<dbReference type="PROSITE" id="PS51273">
    <property type="entry name" value="GATASE_TYPE_1"/>
    <property type="match status" value="1"/>
</dbReference>
<dbReference type="PROSITE" id="PS51553">
    <property type="entry name" value="GMPS_ATP_PPASE"/>
    <property type="match status" value="1"/>
</dbReference>
<proteinExistence type="inferred from homology"/>
<evidence type="ECO:0000255" key="1">
    <source>
        <dbReference type="HAMAP-Rule" id="MF_00344"/>
    </source>
</evidence>
<organism>
    <name type="scientific">Fusobacterium nucleatum subsp. nucleatum (strain ATCC 25586 / DSM 15643 / BCRC 10681 / CIP 101130 / JCM 8532 / KCTC 2640 / LMG 13131 / VPI 4355)</name>
    <dbReference type="NCBI Taxonomy" id="190304"/>
    <lineage>
        <taxon>Bacteria</taxon>
        <taxon>Fusobacteriati</taxon>
        <taxon>Fusobacteriota</taxon>
        <taxon>Fusobacteriia</taxon>
        <taxon>Fusobacteriales</taxon>
        <taxon>Fusobacteriaceae</taxon>
        <taxon>Fusobacterium</taxon>
    </lineage>
</organism>
<sequence length="512" mass="57394">MKKGGIVILDFGSQYNQLIARRVREMGVYAEVVPFHEDVDKILAREPKGIILSGGPASVYAEGAPSLDIKLFQNNIPILGLCYGMQLITHLHGGKVARADKQEFGKAELELDDKNHILYKNIPNKTTVWMSHGDHVTEMAPDFKIIAHTDSSIAAIENSDKNIYAFQYHPEVTHSQHGFDMLKNFIFGIAKAEKNWSMENYIESTVKQIKERVGNKQVILGLSGGVDSSVAAALINKAIGRQLTCIFVDTGLLRKDEAKQVMEVYAKNFDMNIKCINAEERFLTKLAGVTDPETKRKIIGKEFVEVFNEEAKKIEGAEFLAQGTIYPDVIESVSVKGPSVTIKSHHNVGGLPEDLKFELLEPLRELFKDEVRKVGRELGIPDYMVDRHPFPGPGLGIRILGEVTKEKADILREADAIFIEELRKADLYNKVSQAFVVLLPVKSVGVMGDERTYEYTAVLRSANTIDFMTATWSHLPYEFLEKVSNRILNEVKGINRLTYDISSKPPATIEWE</sequence>
<comment type="function">
    <text evidence="1">Catalyzes the synthesis of GMP from XMP.</text>
</comment>
<comment type="catalytic activity">
    <reaction evidence="1">
        <text>XMP + L-glutamine + ATP + H2O = GMP + L-glutamate + AMP + diphosphate + 2 H(+)</text>
        <dbReference type="Rhea" id="RHEA:11680"/>
        <dbReference type="ChEBI" id="CHEBI:15377"/>
        <dbReference type="ChEBI" id="CHEBI:15378"/>
        <dbReference type="ChEBI" id="CHEBI:29985"/>
        <dbReference type="ChEBI" id="CHEBI:30616"/>
        <dbReference type="ChEBI" id="CHEBI:33019"/>
        <dbReference type="ChEBI" id="CHEBI:57464"/>
        <dbReference type="ChEBI" id="CHEBI:58115"/>
        <dbReference type="ChEBI" id="CHEBI:58359"/>
        <dbReference type="ChEBI" id="CHEBI:456215"/>
        <dbReference type="EC" id="6.3.5.2"/>
    </reaction>
</comment>
<comment type="pathway">
    <text evidence="1">Purine metabolism; GMP biosynthesis; GMP from XMP (L-Gln route): step 1/1.</text>
</comment>
<comment type="subunit">
    <text evidence="1">Homodimer.</text>
</comment>
<keyword id="KW-0067">ATP-binding</keyword>
<keyword id="KW-0315">Glutamine amidotransferase</keyword>
<keyword id="KW-0332">GMP biosynthesis</keyword>
<keyword id="KW-0436">Ligase</keyword>
<keyword id="KW-0547">Nucleotide-binding</keyword>
<keyword id="KW-0658">Purine biosynthesis</keyword>
<keyword id="KW-1185">Reference proteome</keyword>